<proteinExistence type="inferred from homology"/>
<accession>Q0VRB5</accession>
<feature type="chain" id="PRO_0000267719" description="3-hydroxydecanoyl-[acyl-carrier-protein] dehydratase">
    <location>
        <begin position="1"/>
        <end position="175"/>
    </location>
</feature>
<feature type="active site" evidence="1">
    <location>
        <position position="74"/>
    </location>
</feature>
<organism>
    <name type="scientific">Alcanivorax borkumensis (strain ATCC 700651 / DSM 11573 / NCIMB 13689 / SK2)</name>
    <dbReference type="NCBI Taxonomy" id="393595"/>
    <lineage>
        <taxon>Bacteria</taxon>
        <taxon>Pseudomonadati</taxon>
        <taxon>Pseudomonadota</taxon>
        <taxon>Gammaproteobacteria</taxon>
        <taxon>Oceanospirillales</taxon>
        <taxon>Alcanivoracaceae</taxon>
        <taxon>Alcanivorax</taxon>
    </lineage>
</organism>
<sequence>MSTTTTQKSSYTREDLLACAHGELFGPNNARLPLPNMLMMDRITHISDQGGKYGKGEIIAELDIHPDLWFFDCHFESDPVMPGCLGLDATWQLLGFFLGWVGNPGRGRALGVGNVKFSGQVLPTAKKLTYRIDLKRVISRKLVLGLADATVSVDGKDIYQADDLKVGLFTSTDGF</sequence>
<evidence type="ECO:0000255" key="1">
    <source>
        <dbReference type="HAMAP-Rule" id="MF_00405"/>
    </source>
</evidence>
<reference key="1">
    <citation type="journal article" date="2006" name="Nat. Biotechnol.">
        <title>Genome sequence of the ubiquitous hydrocarbon-degrading marine bacterium Alcanivorax borkumensis.</title>
        <authorList>
            <person name="Schneiker S."/>
            <person name="Martins dos Santos V.A.P."/>
            <person name="Bartels D."/>
            <person name="Bekel T."/>
            <person name="Brecht M."/>
            <person name="Buhrmester J."/>
            <person name="Chernikova T.N."/>
            <person name="Denaro R."/>
            <person name="Ferrer M."/>
            <person name="Gertler C."/>
            <person name="Goesmann A."/>
            <person name="Golyshina O.V."/>
            <person name="Kaminski F."/>
            <person name="Khachane A.N."/>
            <person name="Lang S."/>
            <person name="Linke B."/>
            <person name="McHardy A.C."/>
            <person name="Meyer F."/>
            <person name="Nechitaylo T."/>
            <person name="Puehler A."/>
            <person name="Regenhardt D."/>
            <person name="Rupp O."/>
            <person name="Sabirova J.S."/>
            <person name="Selbitschka W."/>
            <person name="Yakimov M.M."/>
            <person name="Timmis K.N."/>
            <person name="Vorhoelter F.-J."/>
            <person name="Weidner S."/>
            <person name="Kaiser O."/>
            <person name="Golyshin P.N."/>
        </authorList>
    </citation>
    <scope>NUCLEOTIDE SEQUENCE [LARGE SCALE GENOMIC DNA]</scope>
    <source>
        <strain>ATCC 700651 / DSM 11573 / NCIMB 13689 / SK2</strain>
    </source>
</reference>
<name>FABA_ALCBS</name>
<keyword id="KW-0963">Cytoplasm</keyword>
<keyword id="KW-0275">Fatty acid biosynthesis</keyword>
<keyword id="KW-0276">Fatty acid metabolism</keyword>
<keyword id="KW-0413">Isomerase</keyword>
<keyword id="KW-0444">Lipid biosynthesis</keyword>
<keyword id="KW-0443">Lipid metabolism</keyword>
<keyword id="KW-0456">Lyase</keyword>
<keyword id="KW-1185">Reference proteome</keyword>
<comment type="function">
    <text evidence="1">Necessary for the introduction of cis unsaturation into fatty acids. Catalyzes the dehydration of (3R)-3-hydroxydecanoyl-ACP to E-(2)-decenoyl-ACP and then its isomerization to Z-(3)-decenoyl-ACP. Can catalyze the dehydratase reaction for beta-hydroxyacyl-ACPs with saturated chain lengths up to 16:0, being most active on intermediate chain length.</text>
</comment>
<comment type="catalytic activity">
    <reaction evidence="1">
        <text>a (3R)-hydroxyacyl-[ACP] = a (2E)-enoyl-[ACP] + H2O</text>
        <dbReference type="Rhea" id="RHEA:13097"/>
        <dbReference type="Rhea" id="RHEA-COMP:9925"/>
        <dbReference type="Rhea" id="RHEA-COMP:9945"/>
        <dbReference type="ChEBI" id="CHEBI:15377"/>
        <dbReference type="ChEBI" id="CHEBI:78784"/>
        <dbReference type="ChEBI" id="CHEBI:78827"/>
        <dbReference type="EC" id="4.2.1.59"/>
    </reaction>
</comment>
<comment type="catalytic activity">
    <reaction evidence="1">
        <text>(3R)-hydroxydecanoyl-[ACP] = (2E)-decenoyl-[ACP] + H2O</text>
        <dbReference type="Rhea" id="RHEA:41860"/>
        <dbReference type="Rhea" id="RHEA-COMP:9638"/>
        <dbReference type="Rhea" id="RHEA-COMP:9639"/>
        <dbReference type="ChEBI" id="CHEBI:15377"/>
        <dbReference type="ChEBI" id="CHEBI:78466"/>
        <dbReference type="ChEBI" id="CHEBI:78467"/>
    </reaction>
</comment>
<comment type="catalytic activity">
    <reaction evidence="1">
        <text>(2E)-decenoyl-[ACP] = (3Z)-decenoyl-[ACP]</text>
        <dbReference type="Rhea" id="RHEA:23568"/>
        <dbReference type="Rhea" id="RHEA-COMP:9639"/>
        <dbReference type="Rhea" id="RHEA-COMP:9927"/>
        <dbReference type="ChEBI" id="CHEBI:78467"/>
        <dbReference type="ChEBI" id="CHEBI:78798"/>
        <dbReference type="EC" id="5.3.3.14"/>
    </reaction>
</comment>
<comment type="pathway">
    <text evidence="1">Lipid metabolism; fatty acid biosynthesis.</text>
</comment>
<comment type="subunit">
    <text evidence="1">Homodimer.</text>
</comment>
<comment type="subcellular location">
    <subcellularLocation>
        <location evidence="1">Cytoplasm</location>
    </subcellularLocation>
</comment>
<comment type="similarity">
    <text evidence="1">Belongs to the thioester dehydratase family. FabA subfamily.</text>
</comment>
<gene>
    <name evidence="1" type="primary">fabA</name>
    <name type="ordered locus">ABO_0835</name>
</gene>
<protein>
    <recommendedName>
        <fullName evidence="1">3-hydroxydecanoyl-[acyl-carrier-protein] dehydratase</fullName>
        <ecNumber evidence="1">4.2.1.59</ecNumber>
    </recommendedName>
    <alternativeName>
        <fullName evidence="1">3-hydroxyacyl-[acyl-carrier-protein] dehydratase FabA</fullName>
    </alternativeName>
    <alternativeName>
        <fullName evidence="1">Beta-hydroxydecanoyl thioester dehydrase</fullName>
    </alternativeName>
    <alternativeName>
        <fullName evidence="1">Trans-2-decenoyl-[acyl-carrier-protein] isomerase</fullName>
        <ecNumber evidence="1">5.3.3.14</ecNumber>
    </alternativeName>
</protein>
<dbReference type="EC" id="4.2.1.59" evidence="1"/>
<dbReference type="EC" id="5.3.3.14" evidence="1"/>
<dbReference type="EMBL" id="AM286690">
    <property type="protein sequence ID" value="CAL16283.1"/>
    <property type="molecule type" value="Genomic_DNA"/>
</dbReference>
<dbReference type="RefSeq" id="WP_011588119.1">
    <property type="nucleotide sequence ID" value="NC_008260.1"/>
</dbReference>
<dbReference type="SMR" id="Q0VRB5"/>
<dbReference type="STRING" id="393595.ABO_0835"/>
<dbReference type="KEGG" id="abo:ABO_0835"/>
<dbReference type="eggNOG" id="COG0764">
    <property type="taxonomic scope" value="Bacteria"/>
</dbReference>
<dbReference type="HOGENOM" id="CLU_097925_0_0_6"/>
<dbReference type="OrthoDB" id="9786735at2"/>
<dbReference type="UniPathway" id="UPA00094"/>
<dbReference type="Proteomes" id="UP000008871">
    <property type="component" value="Chromosome"/>
</dbReference>
<dbReference type="GO" id="GO:0005737">
    <property type="term" value="C:cytoplasm"/>
    <property type="evidence" value="ECO:0007669"/>
    <property type="project" value="UniProtKB-SubCell"/>
</dbReference>
<dbReference type="GO" id="GO:0019171">
    <property type="term" value="F:(3R)-hydroxyacyl-[acyl-carrier-protein] dehydratase activity"/>
    <property type="evidence" value="ECO:0007669"/>
    <property type="project" value="UniProtKB-UniRule"/>
</dbReference>
<dbReference type="GO" id="GO:0034017">
    <property type="term" value="F:trans-2-decenoyl-acyl-carrier-protein isomerase activity"/>
    <property type="evidence" value="ECO:0007669"/>
    <property type="project" value="UniProtKB-UniRule"/>
</dbReference>
<dbReference type="GO" id="GO:0006636">
    <property type="term" value="P:unsaturated fatty acid biosynthetic process"/>
    <property type="evidence" value="ECO:0007669"/>
    <property type="project" value="UniProtKB-UniRule"/>
</dbReference>
<dbReference type="CDD" id="cd01287">
    <property type="entry name" value="FabA"/>
    <property type="match status" value="1"/>
</dbReference>
<dbReference type="Gene3D" id="3.10.129.10">
    <property type="entry name" value="Hotdog Thioesterase"/>
    <property type="match status" value="1"/>
</dbReference>
<dbReference type="HAMAP" id="MF_00405">
    <property type="entry name" value="FabA"/>
    <property type="match status" value="1"/>
</dbReference>
<dbReference type="InterPro" id="IPR010083">
    <property type="entry name" value="FabA"/>
</dbReference>
<dbReference type="InterPro" id="IPR013114">
    <property type="entry name" value="FabA_FabZ"/>
</dbReference>
<dbReference type="InterPro" id="IPR029069">
    <property type="entry name" value="HotDog_dom_sf"/>
</dbReference>
<dbReference type="NCBIfam" id="TIGR01749">
    <property type="entry name" value="fabA"/>
    <property type="match status" value="1"/>
</dbReference>
<dbReference type="NCBIfam" id="NF003509">
    <property type="entry name" value="PRK05174.1"/>
    <property type="match status" value="1"/>
</dbReference>
<dbReference type="PANTHER" id="PTHR30272">
    <property type="entry name" value="3-HYDROXYACYL-[ACYL-CARRIER-PROTEIN] DEHYDRATASE"/>
    <property type="match status" value="1"/>
</dbReference>
<dbReference type="PANTHER" id="PTHR30272:SF8">
    <property type="entry name" value="3-HYDROXYDECANOYL-[ACYL-CARRIER-PROTEIN] DEHYDRATASE"/>
    <property type="match status" value="1"/>
</dbReference>
<dbReference type="Pfam" id="PF07977">
    <property type="entry name" value="FabA"/>
    <property type="match status" value="1"/>
</dbReference>
<dbReference type="SUPFAM" id="SSF54637">
    <property type="entry name" value="Thioesterase/thiol ester dehydrase-isomerase"/>
    <property type="match status" value="1"/>
</dbReference>